<keyword id="KW-0997">Cell inner membrane</keyword>
<keyword id="KW-1003">Cell membrane</keyword>
<keyword id="KW-0328">Glycosyltransferase</keyword>
<keyword id="KW-0472">Membrane</keyword>
<keyword id="KW-0808">Transferase</keyword>
<protein>
    <recommendedName>
        <fullName evidence="1">TDP-N-acetylfucosamine:lipid II N-acetylfucosaminyltransferase</fullName>
        <ecNumber evidence="1">2.4.1.325</ecNumber>
    </recommendedName>
    <alternativeName>
        <fullName evidence="1">4-alpha-L-fucosyltransferase</fullName>
    </alternativeName>
    <alternativeName>
        <fullName evidence="1">TDP-Fuc4NAc:lipid II Fuc4NAc transferase</fullName>
        <shortName evidence="1">Fuc4NAc transferase</shortName>
    </alternativeName>
</protein>
<reference key="1">
    <citation type="submission" date="2008-02" db="EMBL/GenBank/DDBJ databases">
        <title>Complete sequence of Yersinia pseudotuberculosis YPIII.</title>
        <authorList>
            <consortium name="US DOE Joint Genome Institute"/>
            <person name="Copeland A."/>
            <person name="Lucas S."/>
            <person name="Lapidus A."/>
            <person name="Glavina del Rio T."/>
            <person name="Dalin E."/>
            <person name="Tice H."/>
            <person name="Bruce D."/>
            <person name="Goodwin L."/>
            <person name="Pitluck S."/>
            <person name="Munk A.C."/>
            <person name="Brettin T."/>
            <person name="Detter J.C."/>
            <person name="Han C."/>
            <person name="Tapia R."/>
            <person name="Schmutz J."/>
            <person name="Larimer F."/>
            <person name="Land M."/>
            <person name="Hauser L."/>
            <person name="Challacombe J.F."/>
            <person name="Green L."/>
            <person name="Lindler L.E."/>
            <person name="Nikolich M.P."/>
            <person name="Richardson P."/>
        </authorList>
    </citation>
    <scope>NUCLEOTIDE SEQUENCE [LARGE SCALE GENOMIC DNA]</scope>
    <source>
        <strain>YPIII</strain>
    </source>
</reference>
<comment type="function">
    <text evidence="1">Catalyzes the synthesis of Und-PP-GlcNAc-ManNAcA-Fuc4NAc (Lipid III), the third lipid-linked intermediate involved in ECA synthesis.</text>
</comment>
<comment type="catalytic activity">
    <reaction evidence="1">
        <text>beta-D-ManNAcA-(1-&gt;4)-alpha-D-GlcNAc-di-trans,octa-cis-undecaprenyl diphosphate + dTDP-4-acetamido-4,6-dideoxy-alpha-D-galactose = alpha-D-FucNAc4-(1-&gt;4)-beta-D-ManNAcA-(1-&gt;4)-D-GlcNAc-undecaprenyl diphosphate + dTDP + H(+)</text>
        <dbReference type="Rhea" id="RHEA:28759"/>
        <dbReference type="ChEBI" id="CHEBI:15378"/>
        <dbReference type="ChEBI" id="CHEBI:58369"/>
        <dbReference type="ChEBI" id="CHEBI:61495"/>
        <dbReference type="ChEBI" id="CHEBI:61496"/>
        <dbReference type="ChEBI" id="CHEBI:68493"/>
        <dbReference type="EC" id="2.4.1.325"/>
    </reaction>
</comment>
<comment type="pathway">
    <text evidence="1">Bacterial outer membrane biogenesis; enterobacterial common antigen biosynthesis.</text>
</comment>
<comment type="subcellular location">
    <subcellularLocation>
        <location evidence="1">Cell inner membrane</location>
        <topology evidence="1">Peripheral membrane protein</topology>
    </subcellularLocation>
</comment>
<comment type="similarity">
    <text evidence="1">Belongs to the glycosyltransferase 56 family.</text>
</comment>
<organism>
    <name type="scientific">Yersinia pseudotuberculosis serotype O:3 (strain YPIII)</name>
    <dbReference type="NCBI Taxonomy" id="502800"/>
    <lineage>
        <taxon>Bacteria</taxon>
        <taxon>Pseudomonadati</taxon>
        <taxon>Pseudomonadota</taxon>
        <taxon>Gammaproteobacteria</taxon>
        <taxon>Enterobacterales</taxon>
        <taxon>Yersiniaceae</taxon>
        <taxon>Yersinia</taxon>
    </lineage>
</organism>
<dbReference type="EC" id="2.4.1.325" evidence="1"/>
<dbReference type="EMBL" id="CP000950">
    <property type="protein sequence ID" value="ACA70286.1"/>
    <property type="molecule type" value="Genomic_DNA"/>
</dbReference>
<dbReference type="RefSeq" id="WP_012304735.1">
    <property type="nucleotide sequence ID" value="NZ_CP009792.1"/>
</dbReference>
<dbReference type="SMR" id="B1JPZ9"/>
<dbReference type="CAZy" id="GT56">
    <property type="family name" value="Glycosyltransferase Family 56"/>
</dbReference>
<dbReference type="KEGG" id="ypy:YPK_4024"/>
<dbReference type="PATRIC" id="fig|502800.11.peg.373"/>
<dbReference type="UniPathway" id="UPA00566"/>
<dbReference type="GO" id="GO:0005886">
    <property type="term" value="C:plasma membrane"/>
    <property type="evidence" value="ECO:0007669"/>
    <property type="project" value="UniProtKB-SubCell"/>
</dbReference>
<dbReference type="GO" id="GO:0102031">
    <property type="term" value="F:4-acetamido-4,6-dideoxy-D-galactose transferase activity"/>
    <property type="evidence" value="ECO:0007669"/>
    <property type="project" value="UniProtKB-EC"/>
</dbReference>
<dbReference type="GO" id="GO:0008417">
    <property type="term" value="F:fucosyltransferase activity"/>
    <property type="evidence" value="ECO:0007669"/>
    <property type="project" value="InterPro"/>
</dbReference>
<dbReference type="GO" id="GO:0009246">
    <property type="term" value="P:enterobacterial common antigen biosynthetic process"/>
    <property type="evidence" value="ECO:0007669"/>
    <property type="project" value="UniProtKB-UniRule"/>
</dbReference>
<dbReference type="GO" id="GO:0036065">
    <property type="term" value="P:fucosylation"/>
    <property type="evidence" value="ECO:0007669"/>
    <property type="project" value="InterPro"/>
</dbReference>
<dbReference type="HAMAP" id="MF_01002">
    <property type="entry name" value="WecF_RffT"/>
    <property type="match status" value="1"/>
</dbReference>
<dbReference type="InterPro" id="IPR009993">
    <property type="entry name" value="WecF"/>
</dbReference>
<dbReference type="NCBIfam" id="NF002753">
    <property type="entry name" value="PRK02797.1-2"/>
    <property type="match status" value="1"/>
</dbReference>
<dbReference type="Pfam" id="PF07429">
    <property type="entry name" value="Glyco_transf_56"/>
    <property type="match status" value="1"/>
</dbReference>
<dbReference type="SUPFAM" id="SSF53756">
    <property type="entry name" value="UDP-Glycosyltransferase/glycogen phosphorylase"/>
    <property type="match status" value="1"/>
</dbReference>
<gene>
    <name evidence="1" type="primary">wecF</name>
    <name evidence="1" type="synonym">rffT</name>
    <name type="ordered locus">YPK_4024</name>
</gene>
<name>WECF_YERPY</name>
<evidence type="ECO:0000255" key="1">
    <source>
        <dbReference type="HAMAP-Rule" id="MF_01002"/>
    </source>
</evidence>
<feature type="chain" id="PRO_1000134614" description="TDP-N-acetylfucosamine:lipid II N-acetylfucosaminyltransferase">
    <location>
        <begin position="1"/>
        <end position="361"/>
    </location>
</feature>
<accession>B1JPZ9</accession>
<proteinExistence type="inferred from homology"/>
<sequence>MITLTHVLGSDIPHHNLTVLRFFNDVLAKCLPVEQVRHFMVAAKETAPFSSFPQLDINTYSDKKALAEAVIARAQADRSARFFWHGQFNATLWLALLSGKIKPGQVYWHVWGADLYEDAKSLKFRLFYLLRRIAQGRVGHVFATRGDLIHYQQRHPRVPASLLYFPTRMDPALTAINIDKPLAGPMTILVGNSGDTTNRHIEALKAIHQQFGPDVRVIIPMGYPANNEAYIEQVRQAGLALFLQDNLRILTEQIPFDDYLNILRECDLGYFIFNRQQGIGTLCLLTQFGVPFVLSRKNPFWQDLAEQHIPVFFYGDTLDEPLIREAQRQLAGLDKQAIAFFNPNYIEGWKQALALAAGEHP</sequence>